<keyword id="KW-0007">Acetylation</keyword>
<keyword id="KW-0067">ATP-binding</keyword>
<keyword id="KW-0276">Fatty acid metabolism</keyword>
<keyword id="KW-0436">Ligase</keyword>
<keyword id="KW-0443">Lipid metabolism</keyword>
<keyword id="KW-0460">Magnesium</keyword>
<keyword id="KW-0479">Metal-binding</keyword>
<keyword id="KW-0496">Mitochondrion</keyword>
<keyword id="KW-0547">Nucleotide-binding</keyword>
<keyword id="KW-1185">Reference proteome</keyword>
<keyword id="KW-0809">Transit peptide</keyword>
<sequence>MLACVTMKMLRHAKCFQRLAIFGSVRALHKDNRTATPQNFSNYESMKQDFKLGIPEYFNFAKDVLDQWTDKEKAGKKPSNPAFWWINRNGEEVRWSFEELGSLSRKFANILSEACSLQRGDRVILILPRVPEWWLANVACLRTGTVLIPGTTQLTQKDILYRLQSSKANCIITNDVLAPAVDAVAPKCENLHSKLIVSENSREGWGNLKEMMKHASDSHTCVKTKHNEIMAIFFTSGTSGYPKMTAHTHSSFGLGLSVNGRFWLDLTPSDVMWNTSDTGWAKSAWSSVFSPWIQGACVFTHHLPRFEPTSILQTLSKYPITVFCSAPTVYRMLVQNDMASYKFKSLKHCVSAGEPITPDVTEKWRNKTGLDIYEGYGQTETVLICGNFKGMKIKPGSMGKPSPAFDVKIVDVNGNVLPPGQEGDIGIQVLPNRPFGLFTHYVDNPSKTASTLRGNFYITGDRGYMDEDGYFWFVARADDVILSSGYRIGPFEVENALNEHPSVAESAVVSSPDPIRGEVVKAFVVLNPDYKSHDQEQLIKEIQEHVKKTTAPYKYPRKVEFIQELPKTISGKTKRNELRKKEWKTI</sequence>
<accession>Q5REV5</accession>
<proteinExistence type="evidence at transcript level"/>
<protein>
    <recommendedName>
        <fullName>Acyl-coenzyme A synthetase ACSM3, mitochondrial</fullName>
        <ecNumber evidence="3">6.2.1.2</ecNumber>
    </recommendedName>
    <alternativeName>
        <fullName>Acyl-CoA synthetase medium-chain family member 3</fullName>
    </alternativeName>
    <alternativeName>
        <fullName>Butyrate--CoA ligase 3</fullName>
    </alternativeName>
    <alternativeName>
        <fullName>Butyryl-coenzyme A synthetase 3</fullName>
    </alternativeName>
    <alternativeName>
        <fullName>Middle-chain acyl-CoA synthetase 3</fullName>
    </alternativeName>
    <alternativeName>
        <fullName>Propionate--CoA ligase</fullName>
        <ecNumber evidence="3">6.2.1.17</ecNumber>
    </alternativeName>
    <alternativeName>
        <fullName>Protein SA homolog</fullName>
    </alternativeName>
</protein>
<evidence type="ECO:0000250" key="1"/>
<evidence type="ECO:0000250" key="2">
    <source>
        <dbReference type="UniProtKB" id="Q08AH1"/>
    </source>
</evidence>
<evidence type="ECO:0000250" key="3">
    <source>
        <dbReference type="UniProtKB" id="Q3UNX5"/>
    </source>
</evidence>
<evidence type="ECO:0000250" key="4">
    <source>
        <dbReference type="UniProtKB" id="Q53FZ2"/>
    </source>
</evidence>
<evidence type="ECO:0000255" key="5"/>
<evidence type="ECO:0000305" key="6"/>
<dbReference type="EC" id="6.2.1.2" evidence="3"/>
<dbReference type="EC" id="6.2.1.17" evidence="3"/>
<dbReference type="EMBL" id="CR857411">
    <property type="protein sequence ID" value="CAH89702.1"/>
    <property type="molecule type" value="mRNA"/>
</dbReference>
<dbReference type="RefSeq" id="NP_001124772.1">
    <property type="nucleotide sequence ID" value="NM_001131300.1"/>
</dbReference>
<dbReference type="SMR" id="Q5REV5"/>
<dbReference type="FunCoup" id="Q5REV5">
    <property type="interactions" value="288"/>
</dbReference>
<dbReference type="STRING" id="9601.ENSPPYP00000008096"/>
<dbReference type="Ensembl" id="ENSPPYT00000008431.3">
    <property type="protein sequence ID" value="ENSPPYP00000008096.2"/>
    <property type="gene ID" value="ENSPPYG00000007161.3"/>
</dbReference>
<dbReference type="GeneID" id="100171624"/>
<dbReference type="KEGG" id="pon:100171624"/>
<dbReference type="CTD" id="6296"/>
<dbReference type="eggNOG" id="KOG1175">
    <property type="taxonomic scope" value="Eukaryota"/>
</dbReference>
<dbReference type="GeneTree" id="ENSGT00940000157930"/>
<dbReference type="HOGENOM" id="CLU_000022_59_10_1"/>
<dbReference type="InParanoid" id="Q5REV5"/>
<dbReference type="OMA" id="HAWSNLF"/>
<dbReference type="OrthoDB" id="6614653at2759"/>
<dbReference type="TreeFam" id="TF354287"/>
<dbReference type="Proteomes" id="UP000001595">
    <property type="component" value="Unplaced"/>
</dbReference>
<dbReference type="GO" id="GO:0005759">
    <property type="term" value="C:mitochondrial matrix"/>
    <property type="evidence" value="ECO:0007669"/>
    <property type="project" value="UniProtKB-SubCell"/>
</dbReference>
<dbReference type="GO" id="GO:0005739">
    <property type="term" value="C:mitochondrion"/>
    <property type="evidence" value="ECO:0000250"/>
    <property type="project" value="UniProtKB"/>
</dbReference>
<dbReference type="GO" id="GO:0043759">
    <property type="term" value="F:2-methylbutanoate-CoA ligase activity"/>
    <property type="evidence" value="ECO:0007669"/>
    <property type="project" value="RHEA"/>
</dbReference>
<dbReference type="GO" id="GO:0005524">
    <property type="term" value="F:ATP binding"/>
    <property type="evidence" value="ECO:0007669"/>
    <property type="project" value="UniProtKB-KW"/>
</dbReference>
<dbReference type="GO" id="GO:0004321">
    <property type="term" value="F:fatty-acyl-CoA synthase activity"/>
    <property type="evidence" value="ECO:0007669"/>
    <property type="project" value="TreeGrafter"/>
</dbReference>
<dbReference type="GO" id="GO:0031956">
    <property type="term" value="F:medium-chain fatty acid-CoA ligase activity"/>
    <property type="evidence" value="ECO:0000250"/>
    <property type="project" value="UniProtKB"/>
</dbReference>
<dbReference type="GO" id="GO:0046872">
    <property type="term" value="F:metal ion binding"/>
    <property type="evidence" value="ECO:0007669"/>
    <property type="project" value="UniProtKB-KW"/>
</dbReference>
<dbReference type="GO" id="GO:0050218">
    <property type="term" value="F:propionate-CoA ligase activity"/>
    <property type="evidence" value="ECO:0007669"/>
    <property type="project" value="UniProtKB-EC"/>
</dbReference>
<dbReference type="GO" id="GO:0006637">
    <property type="term" value="P:acyl-CoA metabolic process"/>
    <property type="evidence" value="ECO:0007669"/>
    <property type="project" value="TreeGrafter"/>
</dbReference>
<dbReference type="GO" id="GO:0006633">
    <property type="term" value="P:fatty acid biosynthetic process"/>
    <property type="evidence" value="ECO:0007669"/>
    <property type="project" value="TreeGrafter"/>
</dbReference>
<dbReference type="CDD" id="cd05928">
    <property type="entry name" value="MACS_euk"/>
    <property type="match status" value="1"/>
</dbReference>
<dbReference type="FunFam" id="3.40.50.12780:FF:000007">
    <property type="entry name" value="Acyl-coenzyme A synthetase ACSM2A, mitochondrial"/>
    <property type="match status" value="1"/>
</dbReference>
<dbReference type="FunFam" id="3.30.300.30:FF:000005">
    <property type="entry name" value="Acyl-coenzyme A synthetase ACSM5, mitochondrial"/>
    <property type="match status" value="1"/>
</dbReference>
<dbReference type="Gene3D" id="3.30.300.30">
    <property type="match status" value="1"/>
</dbReference>
<dbReference type="Gene3D" id="3.40.50.12780">
    <property type="entry name" value="N-terminal domain of ligase-like"/>
    <property type="match status" value="1"/>
</dbReference>
<dbReference type="InterPro" id="IPR025110">
    <property type="entry name" value="AMP-bd_C"/>
</dbReference>
<dbReference type="InterPro" id="IPR045851">
    <property type="entry name" value="AMP-bd_C_sf"/>
</dbReference>
<dbReference type="InterPro" id="IPR020845">
    <property type="entry name" value="AMP-binding_CS"/>
</dbReference>
<dbReference type="InterPro" id="IPR000873">
    <property type="entry name" value="AMP-dep_synth/lig_dom"/>
</dbReference>
<dbReference type="InterPro" id="IPR042099">
    <property type="entry name" value="ANL_N_sf"/>
</dbReference>
<dbReference type="InterPro" id="IPR051087">
    <property type="entry name" value="Mitochondrial_ACSM"/>
</dbReference>
<dbReference type="PANTHER" id="PTHR43605">
    <property type="entry name" value="ACYL-COENZYME A SYNTHETASE"/>
    <property type="match status" value="1"/>
</dbReference>
<dbReference type="PANTHER" id="PTHR43605:SF7">
    <property type="entry name" value="ACYL-COENZYME A SYNTHETASE ACSM3, MITOCHONDRIAL"/>
    <property type="match status" value="1"/>
</dbReference>
<dbReference type="Pfam" id="PF00501">
    <property type="entry name" value="AMP-binding"/>
    <property type="match status" value="1"/>
</dbReference>
<dbReference type="Pfam" id="PF13193">
    <property type="entry name" value="AMP-binding_C"/>
    <property type="match status" value="1"/>
</dbReference>
<dbReference type="SUPFAM" id="SSF56801">
    <property type="entry name" value="Acetyl-CoA synthetase-like"/>
    <property type="match status" value="1"/>
</dbReference>
<dbReference type="PROSITE" id="PS00455">
    <property type="entry name" value="AMP_BINDING"/>
    <property type="match status" value="1"/>
</dbReference>
<feature type="transit peptide" description="Mitochondrion" evidence="5">
    <location>
        <begin position="1"/>
        <end position="27"/>
    </location>
</feature>
<feature type="chain" id="PRO_0000306099" description="Acyl-coenzyme A synthetase ACSM3, mitochondrial">
    <location>
        <begin position="28"/>
        <end position="586"/>
    </location>
</feature>
<feature type="binding site" evidence="1">
    <location>
        <begin position="235"/>
        <end position="243"/>
    </location>
    <ligand>
        <name>ATP</name>
        <dbReference type="ChEBI" id="CHEBI:30616"/>
    </ligand>
</feature>
<feature type="binding site" evidence="1">
    <location>
        <begin position="374"/>
        <end position="379"/>
    </location>
    <ligand>
        <name>ATP</name>
        <dbReference type="ChEBI" id="CHEBI:30616"/>
    </ligand>
</feature>
<feature type="binding site" evidence="1">
    <location>
        <position position="461"/>
    </location>
    <ligand>
        <name>ATP</name>
        <dbReference type="ChEBI" id="CHEBI:30616"/>
    </ligand>
</feature>
<feature type="binding site" evidence="1">
    <location>
        <position position="476"/>
    </location>
    <ligand>
        <name>ATP</name>
        <dbReference type="ChEBI" id="CHEBI:30616"/>
    </ligand>
</feature>
<feature type="binding site" evidence="1">
    <location>
        <position position="572"/>
    </location>
    <ligand>
        <name>ATP</name>
        <dbReference type="ChEBI" id="CHEBI:30616"/>
    </ligand>
</feature>
<feature type="modified residue" description="N6-succinyllysine" evidence="3">
    <location>
        <position position="73"/>
    </location>
</feature>
<feature type="modified residue" description="N6-succinyllysine" evidence="3">
    <location>
        <position position="106"/>
    </location>
</feature>
<feature type="modified residue" description="N6-acetyllysine" evidence="3">
    <location>
        <position position="157"/>
    </location>
</feature>
<gene>
    <name type="primary">ACSM3</name>
    <name type="synonym">SAH</name>
</gene>
<reference key="1">
    <citation type="submission" date="2004-11" db="EMBL/GenBank/DDBJ databases">
        <authorList>
            <consortium name="The German cDNA consortium"/>
        </authorList>
    </citation>
    <scope>NUCLEOTIDE SEQUENCE [LARGE SCALE MRNA]</scope>
    <source>
        <tissue>Kidney</tissue>
    </source>
</reference>
<comment type="function">
    <text evidence="3">Catalyzes the activation of fatty acids by CoA to produce an acyl-CoA, the first step in fatty acid metabolism (By similarity). Capable of activating medium-chain fatty acids with a preference for isobutyrate among fatty acids with 2-6 carbon atoms (By similarity).</text>
</comment>
<comment type="catalytic activity">
    <reaction evidence="3">
        <text>a medium-chain fatty acid + ATP + CoA = a medium-chain fatty acyl-CoA + AMP + diphosphate</text>
        <dbReference type="Rhea" id="RHEA:48340"/>
        <dbReference type="ChEBI" id="CHEBI:30616"/>
        <dbReference type="ChEBI" id="CHEBI:33019"/>
        <dbReference type="ChEBI" id="CHEBI:57287"/>
        <dbReference type="ChEBI" id="CHEBI:59558"/>
        <dbReference type="ChEBI" id="CHEBI:90546"/>
        <dbReference type="ChEBI" id="CHEBI:456215"/>
        <dbReference type="EC" id="6.2.1.2"/>
    </reaction>
    <physiologicalReaction direction="left-to-right" evidence="3">
        <dbReference type="Rhea" id="RHEA:48341"/>
    </physiologicalReaction>
</comment>
<comment type="catalytic activity">
    <reaction evidence="3">
        <text>propanoate + ATP + CoA = propanoyl-CoA + AMP + diphosphate</text>
        <dbReference type="Rhea" id="RHEA:20373"/>
        <dbReference type="ChEBI" id="CHEBI:17272"/>
        <dbReference type="ChEBI" id="CHEBI:30616"/>
        <dbReference type="ChEBI" id="CHEBI:33019"/>
        <dbReference type="ChEBI" id="CHEBI:57287"/>
        <dbReference type="ChEBI" id="CHEBI:57392"/>
        <dbReference type="ChEBI" id="CHEBI:456215"/>
        <dbReference type="EC" id="6.2.1.17"/>
    </reaction>
    <physiologicalReaction direction="left-to-right" evidence="3">
        <dbReference type="Rhea" id="RHEA:20374"/>
    </physiologicalReaction>
</comment>
<comment type="catalytic activity">
    <reaction evidence="3">
        <text>butanoate + ATP + CoA = butanoyl-CoA + AMP + diphosphate</text>
        <dbReference type="Rhea" id="RHEA:46172"/>
        <dbReference type="ChEBI" id="CHEBI:17968"/>
        <dbReference type="ChEBI" id="CHEBI:30616"/>
        <dbReference type="ChEBI" id="CHEBI:33019"/>
        <dbReference type="ChEBI" id="CHEBI:57287"/>
        <dbReference type="ChEBI" id="CHEBI:57371"/>
        <dbReference type="ChEBI" id="CHEBI:456215"/>
    </reaction>
    <physiologicalReaction direction="left-to-right" evidence="3">
        <dbReference type="Rhea" id="RHEA:46173"/>
    </physiologicalReaction>
</comment>
<comment type="catalytic activity">
    <reaction evidence="3">
        <text>2-methylpropanoate + ATP + CoA = 2-methylpropanoyl-CoA + AMP + diphosphate</text>
        <dbReference type="Rhea" id="RHEA:46176"/>
        <dbReference type="ChEBI" id="CHEBI:30616"/>
        <dbReference type="ChEBI" id="CHEBI:33019"/>
        <dbReference type="ChEBI" id="CHEBI:48944"/>
        <dbReference type="ChEBI" id="CHEBI:57287"/>
        <dbReference type="ChEBI" id="CHEBI:57338"/>
        <dbReference type="ChEBI" id="CHEBI:456215"/>
    </reaction>
    <physiologicalReaction direction="left-to-right" evidence="3">
        <dbReference type="Rhea" id="RHEA:46177"/>
    </physiologicalReaction>
</comment>
<comment type="catalytic activity">
    <reaction evidence="3">
        <text>2-methylbutanoate + ATP + CoA = 2-methylbutanoyl-CoA + AMP + diphosphate</text>
        <dbReference type="Rhea" id="RHEA:46180"/>
        <dbReference type="ChEBI" id="CHEBI:30616"/>
        <dbReference type="ChEBI" id="CHEBI:33019"/>
        <dbReference type="ChEBI" id="CHEBI:48946"/>
        <dbReference type="ChEBI" id="CHEBI:57287"/>
        <dbReference type="ChEBI" id="CHEBI:57336"/>
        <dbReference type="ChEBI" id="CHEBI:456215"/>
    </reaction>
    <physiologicalReaction direction="left-to-right" evidence="3">
        <dbReference type="Rhea" id="RHEA:46181"/>
    </physiologicalReaction>
</comment>
<comment type="catalytic activity">
    <reaction evidence="4">
        <text>octanoate + ATP + CoA = octanoyl-CoA + AMP + diphosphate</text>
        <dbReference type="Rhea" id="RHEA:33631"/>
        <dbReference type="ChEBI" id="CHEBI:25646"/>
        <dbReference type="ChEBI" id="CHEBI:30616"/>
        <dbReference type="ChEBI" id="CHEBI:33019"/>
        <dbReference type="ChEBI" id="CHEBI:57287"/>
        <dbReference type="ChEBI" id="CHEBI:57386"/>
        <dbReference type="ChEBI" id="CHEBI:456215"/>
    </reaction>
    <physiologicalReaction direction="left-to-right" evidence="4">
        <dbReference type="Rhea" id="RHEA:33632"/>
    </physiologicalReaction>
</comment>
<comment type="cofactor">
    <cofactor evidence="2">
        <name>Mg(2+)</name>
        <dbReference type="ChEBI" id="CHEBI:18420"/>
    </cofactor>
    <cofactor evidence="2">
        <name>Mn(2+)</name>
        <dbReference type="ChEBI" id="CHEBI:29035"/>
    </cofactor>
</comment>
<comment type="subcellular location">
    <subcellularLocation>
        <location evidence="4">Mitochondrion</location>
    </subcellularLocation>
    <subcellularLocation>
        <location evidence="3">Mitochondrion matrix</location>
    </subcellularLocation>
</comment>
<comment type="similarity">
    <text evidence="6">Belongs to the ATP-dependent AMP-binding enzyme family.</text>
</comment>
<name>ACSM3_PONAB</name>
<organism>
    <name type="scientific">Pongo abelii</name>
    <name type="common">Sumatran orangutan</name>
    <name type="synonym">Pongo pygmaeus abelii</name>
    <dbReference type="NCBI Taxonomy" id="9601"/>
    <lineage>
        <taxon>Eukaryota</taxon>
        <taxon>Metazoa</taxon>
        <taxon>Chordata</taxon>
        <taxon>Craniata</taxon>
        <taxon>Vertebrata</taxon>
        <taxon>Euteleostomi</taxon>
        <taxon>Mammalia</taxon>
        <taxon>Eutheria</taxon>
        <taxon>Euarchontoglires</taxon>
        <taxon>Primates</taxon>
        <taxon>Haplorrhini</taxon>
        <taxon>Catarrhini</taxon>
        <taxon>Hominidae</taxon>
        <taxon>Pongo</taxon>
    </lineage>
</organism>